<organism>
    <name type="scientific">Human papillomavirus 21</name>
    <dbReference type="NCBI Taxonomy" id="31548"/>
    <lineage>
        <taxon>Viruses</taxon>
        <taxon>Monodnaviria</taxon>
        <taxon>Shotokuvirae</taxon>
        <taxon>Cossaviricota</taxon>
        <taxon>Papovaviricetes</taxon>
        <taxon>Zurhausenvirales</taxon>
        <taxon>Papillomaviridae</taxon>
        <taxon>Firstpapillomavirinae</taxon>
        <taxon>Betapapillomavirus</taxon>
        <taxon>Betapapillomavirus 1</taxon>
    </lineage>
</organism>
<dbReference type="EMBL" id="U31779">
    <property type="protein sequence ID" value="AAA79400.1"/>
    <property type="molecule type" value="Genomic_DNA"/>
</dbReference>
<dbReference type="EMBL" id="U21872">
    <property type="protein sequence ID" value="AAA92833.1"/>
    <property type="molecule type" value="Genomic_DNA"/>
</dbReference>
<dbReference type="SMR" id="P50787"/>
<dbReference type="Proteomes" id="UP000009165">
    <property type="component" value="Genome"/>
</dbReference>
<dbReference type="GO" id="GO:0042025">
    <property type="term" value="C:host cell nucleus"/>
    <property type="evidence" value="ECO:0007669"/>
    <property type="project" value="UniProtKB-SubCell"/>
</dbReference>
<dbReference type="GO" id="GO:0039620">
    <property type="term" value="C:T=7 icosahedral viral capsid"/>
    <property type="evidence" value="ECO:0007669"/>
    <property type="project" value="UniProtKB-UniRule"/>
</dbReference>
<dbReference type="GO" id="GO:0005198">
    <property type="term" value="F:structural molecule activity"/>
    <property type="evidence" value="ECO:0007669"/>
    <property type="project" value="UniProtKB-UniRule"/>
</dbReference>
<dbReference type="GO" id="GO:0075509">
    <property type="term" value="P:endocytosis involved in viral entry into host cell"/>
    <property type="evidence" value="ECO:0007669"/>
    <property type="project" value="UniProtKB-KW"/>
</dbReference>
<dbReference type="GO" id="GO:0019062">
    <property type="term" value="P:virion attachment to host cell"/>
    <property type="evidence" value="ECO:0007669"/>
    <property type="project" value="UniProtKB-UniRule"/>
</dbReference>
<dbReference type="Gene3D" id="2.60.175.20">
    <property type="entry name" value="Major capsid L1 (late) superfamily, Papillomavirus"/>
    <property type="match status" value="2"/>
</dbReference>
<dbReference type="HAMAP" id="MF_04002">
    <property type="entry name" value="PPV_L1"/>
    <property type="match status" value="1"/>
</dbReference>
<dbReference type="InterPro" id="IPR002210">
    <property type="entry name" value="Capsid_L1_Papillomavir"/>
</dbReference>
<dbReference type="InterPro" id="IPR036973">
    <property type="entry name" value="Capsid_L1_sf_Papillomavir"/>
</dbReference>
<dbReference type="InterPro" id="IPR011222">
    <property type="entry name" value="dsDNA_vir_gr_I_capsid"/>
</dbReference>
<dbReference type="Pfam" id="PF00500">
    <property type="entry name" value="Late_protein_L1"/>
    <property type="match status" value="1"/>
</dbReference>
<dbReference type="PRINTS" id="PR00865">
    <property type="entry name" value="HPVCAPSIDL1"/>
</dbReference>
<dbReference type="SUPFAM" id="SSF88648">
    <property type="entry name" value="Group I dsDNA viruses"/>
    <property type="match status" value="1"/>
</dbReference>
<name>VL1_HPV21</name>
<reference key="1">
    <citation type="submission" date="1995-10" db="EMBL/GenBank/DDBJ databases">
        <authorList>
            <person name="Delius H."/>
        </authorList>
    </citation>
    <scope>NUCLEOTIDE SEQUENCE [GENOMIC DNA]</scope>
</reference>
<reference key="2">
    <citation type="journal article" date="1995" name="J. Virol.">
        <title>Analysis of genomic sequences of 95 papillomavirus types: uniting typing, phylogeny, and taxonomy.</title>
        <authorList>
            <person name="Chan S.-Y."/>
            <person name="Delius H."/>
            <person name="Halpern A.L."/>
            <person name="Bernard H.U."/>
        </authorList>
    </citation>
    <scope>NUCLEOTIDE SEQUENCE [GENOMIC DNA] OF 381-476</scope>
</reference>
<gene>
    <name evidence="1" type="primary">L1</name>
</gene>
<organismHost>
    <name type="scientific">Homo sapiens</name>
    <name type="common">Human</name>
    <dbReference type="NCBI Taxonomy" id="9606"/>
</organismHost>
<evidence type="ECO:0000255" key="1">
    <source>
        <dbReference type="HAMAP-Rule" id="MF_04002"/>
    </source>
</evidence>
<evidence type="ECO:0000256" key="2">
    <source>
        <dbReference type="SAM" id="MobiDB-lite"/>
    </source>
</evidence>
<protein>
    <recommendedName>
        <fullName evidence="1">Major capsid protein L1</fullName>
    </recommendedName>
</protein>
<feature type="chain" id="PRO_0000133505" description="Major capsid protein L1">
    <location>
        <begin position="1"/>
        <end position="518"/>
    </location>
</feature>
<feature type="region of interest" description="Disordered" evidence="2">
    <location>
        <begin position="127"/>
        <end position="149"/>
    </location>
</feature>
<feature type="compositionally biased region" description="Polar residues" evidence="2">
    <location>
        <begin position="131"/>
        <end position="142"/>
    </location>
</feature>
<feature type="disulfide bond" description="Interchain (with C-446)" evidence="1">
    <location>
        <position position="177"/>
    </location>
</feature>
<feature type="disulfide bond" description="Interchain (with C-177)" evidence="1">
    <location>
        <position position="446"/>
    </location>
</feature>
<proteinExistence type="inferred from homology"/>
<accession>P50787</accession>
<keyword id="KW-0167">Capsid protein</keyword>
<keyword id="KW-1015">Disulfide bond</keyword>
<keyword id="KW-1048">Host nucleus</keyword>
<keyword id="KW-0945">Host-virus interaction</keyword>
<keyword id="KW-0426">Late protein</keyword>
<keyword id="KW-1185">Reference proteome</keyword>
<keyword id="KW-1145">T=7 icosahedral capsid protein</keyword>
<keyword id="KW-1161">Viral attachment to host cell</keyword>
<keyword id="KW-1162">Viral penetration into host cytoplasm</keyword>
<keyword id="KW-0946">Virion</keyword>
<keyword id="KW-1164">Virus endocytosis by host</keyword>
<keyword id="KW-1160">Virus entry into host cell</keyword>
<comment type="function">
    <text evidence="1">Forms an icosahedral capsid with a T=7 symmetry and a 50 nm diameter. The capsid is composed of 72 pentamers linked to each other by disulfide bonds and associated with L2 proteins. Binds to heparan sulfate proteoglycans on cell surface of basal layer keratinocytes to provide initial virion attachment. This binding mediates a conformational change in the virus capsid that facilitates efficient infection. The virion enters the host cell via endocytosis. During virus trafficking, L1 protein dissociates from the viral DNA and the genomic DNA is released to the host nucleus. The virion assembly takes place within the cell nucleus. Encapsulates the genomic DNA together with protein L2.</text>
</comment>
<comment type="subunit">
    <text evidence="1">Self-assembles into homopentamers. The capsid has an icosahedral symmetry and consists of 72 capsomers, with each capsomer being a pentamer of L1. Interacts with the minor capsid protein L2; this interaction is necessary for viral genome encapsidation. Interacts with protein E2; this interaction enhances E2-dependent replication and transcription activation.</text>
</comment>
<comment type="subcellular location">
    <subcellularLocation>
        <location evidence="1">Virion</location>
    </subcellularLocation>
    <subcellularLocation>
        <location evidence="1">Host nucleus</location>
    </subcellularLocation>
</comment>
<comment type="similarity">
    <text evidence="1">Belongs to the papillomaviridae L1 protein family.</text>
</comment>
<sequence>MAVWQAASGKVYLPPSTPVARVQSTDEYVQRTNIYYHAYSDRLLTVGHPYFNVYDVNSAKIKVPKVSGNQHRVFRLKLPDPNRFALADMSVYNPDKERLVWACRGIEIGRGQPLGVGSVGHPLFNKVGDTENPSSYKTQPNSTDDRQNVSFDPKQLQMFIIGCAPCLGEHWDKAIPCATDNPPPGSCPPIELINSAIQDGDMADIGYGNLNFKALQQNRSDVSLDIVNETCKYPDFLKMQNDVYGDSCFFYARREQCYARHFFVRGGKTGDDIPAGQIDEGSMKNAYYIPPMNDQAQYKIGNSMYFPTVSGSLVSSDAQLFNRPFWLQRAQGHNNGICWFNQLFVTVVDNTRNTNFSISVNPENADVSKIENYKAESFQEYLRHVEEYELSLILQLCKVPLTAEVLAQINAMNANILEEWQLGFVPAPDNPIHDTYRYIDSAATRCPDKNPPKEREDPYKNMKFWDVDLTERLSLDLDQYSLGRKFLFQAGLQQTTVNGTKTLSSRVSTRGIKRKRKN</sequence>